<sequence>MVNPTVFFDISADGEPLGRVSFELFADKVPKTAENFRALSTGEKGFGYKGSSFHRIIPGFMCQGGDFTRHNGTGGRSIYGEKFEDENFILKHTGPGILSMANAGPNTNGSQFFICTAKTEWLDGKHVVFGKVKEGMNIVEAMERFGSRNGKTSKKITISDCGQL</sequence>
<gene>
    <name type="primary">PPIA</name>
</gene>
<evidence type="ECO:0000250" key="1">
    <source>
        <dbReference type="UniProtKB" id="P17742"/>
    </source>
</evidence>
<evidence type="ECO:0000250" key="2">
    <source>
        <dbReference type="UniProtKB" id="P62937"/>
    </source>
</evidence>
<evidence type="ECO:0000255" key="3"/>
<evidence type="ECO:0000255" key="4">
    <source>
        <dbReference type="PROSITE-ProRule" id="PRU00156"/>
    </source>
</evidence>
<evidence type="ECO:0000305" key="5"/>
<feature type="chain" id="PRO_0000423237" description="Peptidyl-prolyl cis-trans isomerase A">
    <location>
        <begin position="1"/>
        <end position="164"/>
    </location>
</feature>
<feature type="initiator methionine" description="Removed; alternate" evidence="2">
    <location>
        <position position="1"/>
    </location>
</feature>
<feature type="chain" id="PRO_0000064113" description="Peptidyl-prolyl cis-trans isomerase A, N-terminally processed">
    <location>
        <begin position="2"/>
        <end position="164"/>
    </location>
</feature>
<feature type="domain" description="PPIase cyclophilin-type" evidence="4">
    <location>
        <begin position="7"/>
        <end position="163"/>
    </location>
</feature>
<feature type="modified residue" description="N-acetylmethionine" evidence="2">
    <location>
        <position position="1"/>
    </location>
</feature>
<feature type="modified residue" description="N-acetylvaline; in Peptidyl-prolyl cis-trans isomerase A, N-terminally processed" evidence="2">
    <location>
        <position position="2"/>
    </location>
</feature>
<feature type="modified residue" description="N6-acetyllysine; alternate" evidence="2">
    <location>
        <position position="28"/>
    </location>
</feature>
<feature type="modified residue" description="N6-acetyllysine" evidence="2">
    <location>
        <position position="44"/>
    </location>
</feature>
<feature type="modified residue" description="Phosphoserine" evidence="2">
    <location>
        <position position="77"/>
    </location>
</feature>
<feature type="modified residue" description="N6-acetyllysine; alternate" evidence="2">
    <location>
        <position position="82"/>
    </location>
</feature>
<feature type="modified residue" description="Phosphothreonine" evidence="2">
    <location>
        <position position="93"/>
    </location>
</feature>
<feature type="modified residue" description="N6-acetyllysine" evidence="2">
    <location>
        <position position="125"/>
    </location>
</feature>
<feature type="modified residue" description="N6-acetyllysine" evidence="2">
    <location>
        <position position="131"/>
    </location>
</feature>
<feature type="modified residue" description="N6-acetyllysine" evidence="1">
    <location>
        <position position="133"/>
    </location>
</feature>
<feature type="glycosylation site" description="N-linked (GlcNAc...) asparagine" evidence="3">
    <location>
        <position position="108"/>
    </location>
</feature>
<feature type="cross-link" description="Glycyl lysine isopeptide (Lys-Gly) (interchain with G-Cter in SUMO2); alternate" evidence="2">
    <location>
        <position position="28"/>
    </location>
</feature>
<feature type="cross-link" description="Glycyl lysine isopeptide (Lys-Gly) (interchain with G-Cter in ubiquitin); alternate" evidence="2">
    <location>
        <position position="28"/>
    </location>
</feature>
<feature type="cross-link" description="Glycyl lysine isopeptide (Lys-Gly) (interchain with G-Cter in SUMO2); alternate" evidence="2">
    <location>
        <position position="82"/>
    </location>
</feature>
<comment type="function">
    <text evidence="1 2">Catalyzes the cis-trans isomerization of proline imidic peptide bonds in oligopeptides (By similarity). Exerts a strong chemotactic effect on leukocytes partly through activation of one of its membrane receptors BSG/CD147, initiating a signaling cascade that culminates in MAPK/ERK activation (By similarity). Activates endothelial cells (ECs) in a proinflammatory manner by stimulating activation of NF-kappa-B and ERK, JNK and p38 MAP-kinases and by inducing expression of adhesion molecules including SELE and VCAM1 (By similarity). Induces apoptosis in ECs by promoting the FOXO1-dependent expression of CCL2 and BCL2L11 which are involved in EC chemotaxis and apoptosis (By similarity). In response to oxidative stress, initiates proapoptotic and antiapoptotic signaling in ECs via activation of NF-kappa-B and AKT1 and up-regulation of antiapoptotic protein BCL2 (By similarity). Negatively regulates MAP3K5/ASK1 kinase activity, autophosphorylation and oxidative stress-induced apoptosis mediated by MAP3K5/ASK1 (By similarity). Necessary for the assembly of TARDBP in heterogeneous nuclear ribonucleoprotein (hnRNP) complexes and regulates TARDBP binding to RNA UG repeats and TARDBP-dependent expression of HDAC6, ATG7 and VCP which are involved in clearance of protein aggregates (By similarity). Plays an important role in platelet activation and aggregation (By similarity). Regulates calcium mobilization and integrin ITGA2B:ITGB3 bidirectional signaling via increased ROS production as well as by facilitating the interaction between integrin and the cell cytoskeleton (By similarity). Binds heparan sulfate glycosaminoglycans (By similarity).</text>
</comment>
<comment type="catalytic activity">
    <reaction evidence="2">
        <text>[protein]-peptidylproline (omega=180) = [protein]-peptidylproline (omega=0)</text>
        <dbReference type="Rhea" id="RHEA:16237"/>
        <dbReference type="Rhea" id="RHEA-COMP:10747"/>
        <dbReference type="Rhea" id="RHEA-COMP:10748"/>
        <dbReference type="ChEBI" id="CHEBI:83833"/>
        <dbReference type="ChEBI" id="CHEBI:83834"/>
        <dbReference type="EC" id="5.2.1.8"/>
    </reaction>
</comment>
<comment type="activity regulation">
    <text evidence="2">Binds cyclosporin A (CsA). CsA mediates some of its effects via an inhibitory action on PPIase.</text>
</comment>
<comment type="subunit">
    <text evidence="1 2">Interacts with protein phosphatase PPP3CA/calcineurin A (By similarity). Interacts with PRPF19 isoform 2 (via N-terminus) (By similarity). Interacts with isoform 2 of BSG/CD147 (By similarity). Interacts with FOXO1; the interaction promotes FOXO1 dephosphorylation, nuclear accumulation and transcriptional activity (By similarity). Interacts with integrin ITGA2B:ITGB3; the interaction is ROS and peptidyl-prolyl cis-trans isomerase (PPIase) activity-dependent and is increased in the presence of thrombin (By similarity). Interacts with MAP3K5 (By similarity). Interacts with TARDBP; the interaction is dependent on the RNA-binding activity of TARDBP and the PPIase activity of PPIA/CYPA and the acetylation of PPIA/CYPA at Lys-125 favors the interaction (By similarity). Interacts with HNRNPA1, HNRNPA2B1, HNRNPC, RBMX, HNRNPK and HNRNPM (By similarity).</text>
</comment>
<comment type="subcellular location">
    <subcellularLocation>
        <location evidence="2">Cytoplasm</location>
    </subcellularLocation>
    <subcellularLocation>
        <location evidence="2">Secreted</location>
    </subcellularLocation>
    <subcellularLocation>
        <location evidence="2">Nucleus</location>
    </subcellularLocation>
    <text evidence="2">Secretion occurs in response to oxidative stress in vascular smooth muscle through a vesicular secretory pathway that involves actin remodeling and myosin II activation, and mediates ERK1/2 activation.</text>
</comment>
<comment type="PTM">
    <text evidence="2">Acetylation at Lys-125 markedly inhibits catalysis of cis to trans isomerization (By similarity). PPIA acetylation also antagonizes the immunosuppressive effects of cyclosporine by inhibiting the sequential steps of cyclosporine binding and calcineurin inhibition (By similarity). Acetylation at Lys-125 favors the interaction with TARDBP (By similarity).</text>
</comment>
<comment type="similarity">
    <text evidence="5">Belongs to the cyclophilin-type PPIase family. PPIase A subfamily.</text>
</comment>
<organism>
    <name type="scientific">Cricetulus griseus</name>
    <name type="common">Chinese hamster</name>
    <name type="synonym">Cricetulus barabensis griseus</name>
    <dbReference type="NCBI Taxonomy" id="10029"/>
    <lineage>
        <taxon>Eukaryota</taxon>
        <taxon>Metazoa</taxon>
        <taxon>Chordata</taxon>
        <taxon>Craniata</taxon>
        <taxon>Vertebrata</taxon>
        <taxon>Euteleostomi</taxon>
        <taxon>Mammalia</taxon>
        <taxon>Eutheria</taxon>
        <taxon>Euarchontoglires</taxon>
        <taxon>Glires</taxon>
        <taxon>Rodentia</taxon>
        <taxon>Myomorpha</taxon>
        <taxon>Muroidea</taxon>
        <taxon>Cricetidae</taxon>
        <taxon>Cricetinae</taxon>
        <taxon>Cricetulus</taxon>
    </lineage>
</organism>
<protein>
    <recommendedName>
        <fullName>Peptidyl-prolyl cis-trans isomerase A</fullName>
        <shortName>PPIase A</shortName>
        <ecNumber evidence="2">5.2.1.8</ecNumber>
    </recommendedName>
    <alternativeName>
        <fullName>Cyclophilin A</fullName>
    </alternativeName>
    <alternativeName>
        <fullName>Cyclosporin A-binding protein</fullName>
    </alternativeName>
    <alternativeName>
        <fullName>Rotamase A</fullName>
    </alternativeName>
    <component>
        <recommendedName>
            <fullName>Peptidyl-prolyl cis-trans isomerase A, N-terminally processed</fullName>
        </recommendedName>
    </component>
</protein>
<keyword id="KW-0007">Acetylation</keyword>
<keyword id="KW-0053">Apoptosis</keyword>
<keyword id="KW-0963">Cytoplasm</keyword>
<keyword id="KW-0325">Glycoprotein</keyword>
<keyword id="KW-0413">Isomerase</keyword>
<keyword id="KW-1017">Isopeptide bond</keyword>
<keyword id="KW-0539">Nucleus</keyword>
<keyword id="KW-0597">Phosphoprotein</keyword>
<keyword id="KW-0697">Rotamase</keyword>
<keyword id="KW-0964">Secreted</keyword>
<keyword id="KW-0832">Ubl conjugation</keyword>
<name>PPIA_CRIGR</name>
<proteinExistence type="evidence at transcript level"/>
<dbReference type="EC" id="5.2.1.8" evidence="2"/>
<dbReference type="EMBL" id="X17105">
    <property type="protein sequence ID" value="CAA34961.1"/>
    <property type="molecule type" value="mRNA"/>
</dbReference>
<dbReference type="RefSeq" id="XP_007643466.1">
    <property type="nucleotide sequence ID" value="XM_007645276.1"/>
</dbReference>
<dbReference type="BMRB" id="P14851"/>
<dbReference type="SMR" id="P14851"/>
<dbReference type="GlyCosmos" id="P14851">
    <property type="glycosylation" value="1 site, No reported glycans"/>
</dbReference>
<dbReference type="PaxDb" id="10029-XP_007643466.1"/>
<dbReference type="Ensembl" id="ENSCGRT00001016740.1">
    <property type="protein sequence ID" value="ENSCGRP00001012506.1"/>
    <property type="gene ID" value="ENSCGRG00001013904.1"/>
</dbReference>
<dbReference type="GeneID" id="100769490"/>
<dbReference type="CTD" id="5478"/>
<dbReference type="eggNOG" id="KOG0865">
    <property type="taxonomic scope" value="Eukaryota"/>
</dbReference>
<dbReference type="GeneTree" id="ENSGT00950000183087"/>
<dbReference type="OrthoDB" id="9543749at2759"/>
<dbReference type="Proteomes" id="UP000694386">
    <property type="component" value="Unplaced"/>
</dbReference>
<dbReference type="Proteomes" id="UP001108280">
    <property type="component" value="Unplaced"/>
</dbReference>
<dbReference type="GO" id="GO:0005737">
    <property type="term" value="C:cytoplasm"/>
    <property type="evidence" value="ECO:0000250"/>
    <property type="project" value="UniProtKB"/>
</dbReference>
<dbReference type="GO" id="GO:0005829">
    <property type="term" value="C:cytosol"/>
    <property type="evidence" value="ECO:0000250"/>
    <property type="project" value="UniProtKB"/>
</dbReference>
<dbReference type="GO" id="GO:0005576">
    <property type="term" value="C:extracellular region"/>
    <property type="evidence" value="ECO:0000250"/>
    <property type="project" value="UniProtKB"/>
</dbReference>
<dbReference type="GO" id="GO:0030496">
    <property type="term" value="C:midbody"/>
    <property type="evidence" value="ECO:0000314"/>
    <property type="project" value="UniProtKB"/>
</dbReference>
<dbReference type="GO" id="GO:0005634">
    <property type="term" value="C:nucleus"/>
    <property type="evidence" value="ECO:0000250"/>
    <property type="project" value="UniProtKB"/>
</dbReference>
<dbReference type="GO" id="GO:0016018">
    <property type="term" value="F:cyclosporin A binding"/>
    <property type="evidence" value="ECO:0007669"/>
    <property type="project" value="TreeGrafter"/>
</dbReference>
<dbReference type="GO" id="GO:1904399">
    <property type="term" value="F:heparan sulfate binding"/>
    <property type="evidence" value="ECO:0000250"/>
    <property type="project" value="UniProtKB"/>
</dbReference>
<dbReference type="GO" id="GO:0005178">
    <property type="term" value="F:integrin binding"/>
    <property type="evidence" value="ECO:0000250"/>
    <property type="project" value="UniProtKB"/>
</dbReference>
<dbReference type="GO" id="GO:0003755">
    <property type="term" value="F:peptidyl-prolyl cis-trans isomerase activity"/>
    <property type="evidence" value="ECO:0000250"/>
    <property type="project" value="UniProtKB"/>
</dbReference>
<dbReference type="GO" id="GO:0032148">
    <property type="term" value="P:activation of protein kinase B activity"/>
    <property type="evidence" value="ECO:0000250"/>
    <property type="project" value="UniProtKB"/>
</dbReference>
<dbReference type="GO" id="GO:0006915">
    <property type="term" value="P:apoptotic process"/>
    <property type="evidence" value="ECO:0000250"/>
    <property type="project" value="UniProtKB"/>
</dbReference>
<dbReference type="GO" id="GO:0060352">
    <property type="term" value="P:cell adhesion molecule production"/>
    <property type="evidence" value="ECO:0000250"/>
    <property type="project" value="UniProtKB"/>
</dbReference>
<dbReference type="GO" id="GO:0034599">
    <property type="term" value="P:cellular response to oxidative stress"/>
    <property type="evidence" value="ECO:0000250"/>
    <property type="project" value="UniProtKB"/>
</dbReference>
<dbReference type="GO" id="GO:0042118">
    <property type="term" value="P:endothelial cell activation"/>
    <property type="evidence" value="ECO:0000250"/>
    <property type="project" value="UniProtKB"/>
</dbReference>
<dbReference type="GO" id="GO:0030595">
    <property type="term" value="P:leukocyte chemotaxis"/>
    <property type="evidence" value="ECO:0000250"/>
    <property type="project" value="UniProtKB"/>
</dbReference>
<dbReference type="GO" id="GO:1902176">
    <property type="term" value="P:negative regulation of oxidative stress-induced intrinsic apoptotic signaling pathway"/>
    <property type="evidence" value="ECO:0000250"/>
    <property type="project" value="UniProtKB"/>
</dbReference>
<dbReference type="GO" id="GO:0061944">
    <property type="term" value="P:negative regulation of protein K48-linked ubiquitination"/>
    <property type="evidence" value="ECO:0000250"/>
    <property type="project" value="UniProtKB"/>
</dbReference>
<dbReference type="GO" id="GO:0006469">
    <property type="term" value="P:negative regulation of protein kinase activity"/>
    <property type="evidence" value="ECO:0000250"/>
    <property type="project" value="UniProtKB"/>
</dbReference>
<dbReference type="GO" id="GO:0001933">
    <property type="term" value="P:negative regulation of protein phosphorylation"/>
    <property type="evidence" value="ECO:0000250"/>
    <property type="project" value="UniProtKB"/>
</dbReference>
<dbReference type="GO" id="GO:0032873">
    <property type="term" value="P:negative regulation of stress-activated MAPK cascade"/>
    <property type="evidence" value="ECO:0000250"/>
    <property type="project" value="UniProtKB"/>
</dbReference>
<dbReference type="GO" id="GO:0030593">
    <property type="term" value="P:neutrophil chemotaxis"/>
    <property type="evidence" value="ECO:0000250"/>
    <property type="project" value="UniProtKB"/>
</dbReference>
<dbReference type="GO" id="GO:0030168">
    <property type="term" value="P:platelet activation"/>
    <property type="evidence" value="ECO:0000250"/>
    <property type="project" value="UniProtKB"/>
</dbReference>
<dbReference type="GO" id="GO:0070527">
    <property type="term" value="P:platelet aggregation"/>
    <property type="evidence" value="ECO:0000250"/>
    <property type="project" value="UniProtKB"/>
</dbReference>
<dbReference type="GO" id="GO:0043410">
    <property type="term" value="P:positive regulation of MAPK cascade"/>
    <property type="evidence" value="ECO:0000250"/>
    <property type="project" value="UniProtKB"/>
</dbReference>
<dbReference type="GO" id="GO:0051092">
    <property type="term" value="P:positive regulation of NF-kappaB transcription factor activity"/>
    <property type="evidence" value="ECO:0000250"/>
    <property type="project" value="UniProtKB"/>
</dbReference>
<dbReference type="GO" id="GO:0001934">
    <property type="term" value="P:positive regulation of protein phosphorylation"/>
    <property type="evidence" value="ECO:0000250"/>
    <property type="project" value="UniProtKB"/>
</dbReference>
<dbReference type="GO" id="GO:0006457">
    <property type="term" value="P:protein folding"/>
    <property type="evidence" value="ECO:0007669"/>
    <property type="project" value="InterPro"/>
</dbReference>
<dbReference type="GO" id="GO:0000413">
    <property type="term" value="P:protein peptidyl-prolyl isomerization"/>
    <property type="evidence" value="ECO:0000250"/>
    <property type="project" value="UniProtKB"/>
</dbReference>
<dbReference type="GO" id="GO:2001233">
    <property type="term" value="P:regulation of apoptotic signaling pathway"/>
    <property type="evidence" value="ECO:0000250"/>
    <property type="project" value="UniProtKB"/>
</dbReference>
<dbReference type="GO" id="GO:0045069">
    <property type="term" value="P:regulation of viral genome replication"/>
    <property type="evidence" value="ECO:0000250"/>
    <property type="project" value="UniProtKB"/>
</dbReference>
<dbReference type="CDD" id="cd01926">
    <property type="entry name" value="cyclophilin_ABH_like"/>
    <property type="match status" value="1"/>
</dbReference>
<dbReference type="FunFam" id="2.40.100.10:FF:000011">
    <property type="entry name" value="Peptidyl-prolyl cis-trans isomerase A"/>
    <property type="match status" value="1"/>
</dbReference>
<dbReference type="Gene3D" id="2.40.100.10">
    <property type="entry name" value="Cyclophilin-like"/>
    <property type="match status" value="1"/>
</dbReference>
<dbReference type="InterPro" id="IPR029000">
    <property type="entry name" value="Cyclophilin-like_dom_sf"/>
</dbReference>
<dbReference type="InterPro" id="IPR024936">
    <property type="entry name" value="Cyclophilin-type_PPIase"/>
</dbReference>
<dbReference type="InterPro" id="IPR020892">
    <property type="entry name" value="Cyclophilin-type_PPIase_CS"/>
</dbReference>
<dbReference type="InterPro" id="IPR002130">
    <property type="entry name" value="Cyclophilin-type_PPIase_dom"/>
</dbReference>
<dbReference type="PANTHER" id="PTHR11071">
    <property type="entry name" value="PEPTIDYL-PROLYL CIS-TRANS ISOMERASE"/>
    <property type="match status" value="1"/>
</dbReference>
<dbReference type="PANTHER" id="PTHR11071:SF490">
    <property type="entry name" value="PEPTIDYL-PROLYL CIS-TRANS ISOMERASE A"/>
    <property type="match status" value="1"/>
</dbReference>
<dbReference type="Pfam" id="PF00160">
    <property type="entry name" value="Pro_isomerase"/>
    <property type="match status" value="1"/>
</dbReference>
<dbReference type="PIRSF" id="PIRSF001467">
    <property type="entry name" value="Peptidylpro_ismrse"/>
    <property type="match status" value="1"/>
</dbReference>
<dbReference type="PRINTS" id="PR00153">
    <property type="entry name" value="CSAPPISMRASE"/>
</dbReference>
<dbReference type="SUPFAM" id="SSF50891">
    <property type="entry name" value="Cyclophilin-like"/>
    <property type="match status" value="1"/>
</dbReference>
<dbReference type="PROSITE" id="PS00170">
    <property type="entry name" value="CSA_PPIASE_1"/>
    <property type="match status" value="1"/>
</dbReference>
<dbReference type="PROSITE" id="PS50072">
    <property type="entry name" value="CSA_PPIASE_2"/>
    <property type="match status" value="1"/>
</dbReference>
<reference key="1">
    <citation type="journal article" date="1990" name="Nucleic Acids Res.">
        <title>A Chinese hamster ovary cyclophilin cDNA sequence.</title>
        <authorList>
            <person name="Bergsma D.J."/>
            <person name="Sylvester D."/>
        </authorList>
    </citation>
    <scope>NUCLEOTIDE SEQUENCE [MRNA]</scope>
    <source>
        <tissue>Ovary</tissue>
    </source>
</reference>
<accession>P14851</accession>